<comment type="function">
    <text evidence="1">Involved in protein precursor import into chloroplasts. May be part of an intermediate translocation complex acting as a protein-conducting channel at the inner envelope.</text>
</comment>
<comment type="subunit">
    <text evidence="1">Part of the Tic complex.</text>
</comment>
<comment type="subcellular location">
    <subcellularLocation>
        <location evidence="1">Plastid</location>
        <location evidence="1">Chloroplast inner membrane</location>
        <topology evidence="2">Multi-pass membrane protein</topology>
    </subcellularLocation>
</comment>
<comment type="miscellaneous">
    <text>There is a partial copy of the N-terminus (positions 1-367) of ycf1 in the inverted repeat (BAF49901).</text>
</comment>
<comment type="similarity">
    <text evidence="4">Belongs to the TIC214 family.</text>
</comment>
<feature type="chain" id="PRO_0000326560" description="Protein TIC 214">
    <location>
        <begin position="1"/>
        <end position="1791"/>
    </location>
</feature>
<feature type="transmembrane region" description="Helical" evidence="2">
    <location>
        <begin position="19"/>
        <end position="39"/>
    </location>
</feature>
<feature type="transmembrane region" description="Helical" evidence="2">
    <location>
        <begin position="68"/>
        <end position="88"/>
    </location>
</feature>
<feature type="transmembrane region" description="Helical" evidence="2">
    <location>
        <begin position="91"/>
        <end position="111"/>
    </location>
</feature>
<feature type="transmembrane region" description="Helical" evidence="2">
    <location>
        <begin position="133"/>
        <end position="153"/>
    </location>
</feature>
<feature type="transmembrane region" description="Helical" evidence="2">
    <location>
        <begin position="176"/>
        <end position="196"/>
    </location>
</feature>
<feature type="transmembrane region" description="Helical" evidence="2">
    <location>
        <begin position="230"/>
        <end position="250"/>
    </location>
</feature>
<feature type="region of interest" description="Disordered" evidence="3">
    <location>
        <begin position="257"/>
        <end position="278"/>
    </location>
</feature>
<feature type="region of interest" description="Disordered" evidence="3">
    <location>
        <begin position="1498"/>
        <end position="1521"/>
    </location>
</feature>
<feature type="compositionally biased region" description="Basic and acidic residues" evidence="3">
    <location>
        <begin position="257"/>
        <end position="271"/>
    </location>
</feature>
<feature type="sequence conflict" description="In Ref. 1; BAF49901." evidence="4" ref="1">
    <original>DSVLWFEKPLVTLIFDYKRWNRPNRYIKNDQIENAVRNEMSQYFF</original>
    <variation>IHKTNTRTDKKRYGFHRYIW</variation>
    <location>
        <begin position="348"/>
        <end position="392"/>
    </location>
</feature>
<protein>
    <recommendedName>
        <fullName evidence="1">Protein TIC 214</fullName>
    </recommendedName>
    <alternativeName>
        <fullName evidence="1">Translocon at the inner envelope membrane of chloroplasts 214</fullName>
        <shortName evidence="1">AtTIC214</shortName>
    </alternativeName>
</protein>
<geneLocation type="chloroplast"/>
<proteinExistence type="inferred from homology"/>
<accession>A4QJQ8</accession>
<accession>A4QJP6</accession>
<name>TI214_AETGR</name>
<keyword id="KW-0150">Chloroplast</keyword>
<keyword id="KW-0472">Membrane</keyword>
<keyword id="KW-0934">Plastid</keyword>
<keyword id="KW-1001">Plastid inner membrane</keyword>
<keyword id="KW-0653">Protein transport</keyword>
<keyword id="KW-0812">Transmembrane</keyword>
<keyword id="KW-1133">Transmembrane helix</keyword>
<keyword id="KW-0813">Transport</keyword>
<dbReference type="EMBL" id="AP009367">
    <property type="protein sequence ID" value="BAF49913.1"/>
    <property type="molecule type" value="Genomic_DNA"/>
</dbReference>
<dbReference type="EMBL" id="AP009367">
    <property type="protein sequence ID" value="BAF49901.1"/>
    <property type="molecule type" value="Genomic_DNA"/>
</dbReference>
<dbReference type="GO" id="GO:0009706">
    <property type="term" value="C:chloroplast inner membrane"/>
    <property type="evidence" value="ECO:0007669"/>
    <property type="project" value="UniProtKB-SubCell"/>
</dbReference>
<dbReference type="GO" id="GO:0015031">
    <property type="term" value="P:protein transport"/>
    <property type="evidence" value="ECO:0007669"/>
    <property type="project" value="UniProtKB-KW"/>
</dbReference>
<dbReference type="InterPro" id="IPR008896">
    <property type="entry name" value="TIC214"/>
</dbReference>
<dbReference type="PANTHER" id="PTHR33163:SF40">
    <property type="entry name" value="PROTEIN TIC 214"/>
    <property type="match status" value="1"/>
</dbReference>
<dbReference type="PANTHER" id="PTHR33163">
    <property type="entry name" value="PROTEIN TIC 214-RELATED"/>
    <property type="match status" value="1"/>
</dbReference>
<dbReference type="Pfam" id="PF05758">
    <property type="entry name" value="Ycf1"/>
    <property type="match status" value="1"/>
</dbReference>
<organism>
    <name type="scientific">Aethionema grandiflorum</name>
    <name type="common">Persian stone-cress</name>
    <dbReference type="NCBI Taxonomy" id="72657"/>
    <lineage>
        <taxon>Eukaryota</taxon>
        <taxon>Viridiplantae</taxon>
        <taxon>Streptophyta</taxon>
        <taxon>Embryophyta</taxon>
        <taxon>Tracheophyta</taxon>
        <taxon>Spermatophyta</taxon>
        <taxon>Magnoliopsida</taxon>
        <taxon>eudicotyledons</taxon>
        <taxon>Gunneridae</taxon>
        <taxon>Pentapetalae</taxon>
        <taxon>rosids</taxon>
        <taxon>malvids</taxon>
        <taxon>Brassicales</taxon>
        <taxon>Brassicaceae</taxon>
        <taxon>Aethionemeae</taxon>
        <taxon>Aethionema</taxon>
    </lineage>
</organism>
<evidence type="ECO:0000250" key="1">
    <source>
        <dbReference type="UniProtKB" id="P56785"/>
    </source>
</evidence>
<evidence type="ECO:0000255" key="2"/>
<evidence type="ECO:0000256" key="3">
    <source>
        <dbReference type="SAM" id="MobiDB-lite"/>
    </source>
</evidence>
<evidence type="ECO:0000305" key="4"/>
<sequence>MMVFQSFILGNLVSLCMKIINSVVVVGLYYGFLTTFSIGPSYLFLLRARVMDEGEEGTEKKVSATTGFIAGQLMMFISIYYAPLHLALGRPHTITVLALPYLLFHFFWNNHKHFFDYGSTTRNEMRNLRIQCVFLNNLIFQLFNHFILPSSMLARLVNIYMFRCNNKMLFVTSSFVGWLIGHILFMKWVGLVLVWIQQNHSIRSNRSNVLIRSNKYKFLVSELRNSMARIFSILLFITCVYYLGRIPSPILTKKLKGTSETEERGGTKQDQEVSTEEAPFPSLFSEEREDLDQIDEIDEIRVNAKEQINKDDEFHIRTYYNYNKISENIDGNKENSNLEFLKIKKKEDSVLWFEKPLVTLIFDYKRWNRPNRYIKNDQIENAVRNEMSQYFFSACQSDGKDRISFSYPRNLSTFSEMIQKKIPSFRREKNPSDQFSTCWSLINEEKKENLKKEFLNRIEALDKEWSVEHILEKTTRFCHNETKKEYLPKIYDPFLHGISRGRTQRLFPFQIITKTYLKNPIGGSWINKIHGILLNINYQKFEQTIEKFNRKSSAIKKNLSFFSDPQEEKYKSEEESKIFKFLFDVVIADSNDQTLIKNFMDFHEIHKKVPRWSYKLRSDLEELEGENEETIPLEEPGIRARKAKRVVIFTDTEPHNEIYTNLKNNKNYDQNDEMVLIRYSQQSDFRREIIQGSMRPQRRKTVIWEFFQANMHSPLFFDRIDKFFFFSFDIRGLTKQILRNFMRKNEKKKLDKKDAERSKRKEKGRLKIAEVWDSFFFAQILRGFLLVTQSILRKYILLPLLIIIKNSVRMLLFQIPEWSEDLKDWKREMHVKCTYNRVPLSETEFPRNWLTDGIQIKILFPFYLKPWHKSKFHSSQKGRLKKTKDKGKKKDFCFLTVWGMETELPFGSAHKQPSFFGPISKELKKKMKKYKTKSFQVLRFFKERDKIFLKGAKEIKNWIMKNFVFIKGKRNDLSKGNRIPLLGLREIDELTETKNDSITSNPIIHELSVQNRSMEWKNSSFSENKIKNSIDRINTIRNQIEAISKEKKKITNSCNKPPYDSKIIESSKKKWQIVKSKNTRLIRKTFYFVKFCIEQLSLGIFGGIINIPRIITQLLFESTKQIRDKSIYKNEETQEKINKKKNTIYLISTIKKFKSNKKKISYDLCSLSQAYVFYKLSQLQVSNFSKLRAVLEYNICVTSLFVKNQIKDFFQEHGIFHYKLKEKTFLNSESNQWKNWLRSHYQYNLPEIVWARLVTEKWKNKINQDSLVLNQSLNKEDSYEKNQFDNYKKLNSFEADSLLNPKQNLKKDYIYNLFCYNSINSKETIFDMPLDIIIDNFLVSSFRGKSNIRGIGKFRTRKFLDWRILTFWFIKKVNIESAVDTTSKKKNIQTQAQNSERIHKITKTGLANQKKDFFDWMGMNEEILNYPIANFDFLFFPEFVLFSSTYKIKPWVIPIKLLLFNFNEKKTVNKKITRNQNVFIPSNETKNLRFYNLTKESADQGELESDNEKQRNPELALPNQEKNIEENYAESKIKKPENKKQYKPNTEVELDLFLTRYSRFQLRWNFFLNTKILNNIKIYCLLVRLKNPNEIAISSIERAEMNLDLLMIEKNFTFAKLMKKGILIIEPLRLSVKNDGQLIIYRTIGISLVHKNNHQISQREKKKIEKAITKYKKKTVNRKKKNSDFFAPENLLSPKRRREFRILICSKFKTKSTRYRNSRFDKNIQNCGQVLNQKKDLDKDKTNLMKLKFFLWPNFRLEDLACMNRYWFNTNNGNHFSMIRIHMYTRLKINS</sequence>
<gene>
    <name evidence="1" type="primary">TIC214</name>
    <name type="synonym">ycf1-A</name>
</gene>
<gene>
    <name evidence="1" type="primary">TIC214</name>
    <name type="synonym">ycf1-B</name>
</gene>
<reference key="1">
    <citation type="submission" date="2007-03" db="EMBL/GenBank/DDBJ databases">
        <title>Sequencing analysis of Aethionema grandiflorum chloroplast DNA.</title>
        <authorList>
            <person name="Hosouchi T."/>
            <person name="Tsuruoka H."/>
            <person name="Kotani H."/>
        </authorList>
    </citation>
    <scope>NUCLEOTIDE SEQUENCE [LARGE SCALE GENOMIC DNA]</scope>
</reference>